<dbReference type="EMBL" id="U08883">
    <property type="protein sequence ID" value="AAA82007.1"/>
    <property type="molecule type" value="mRNA"/>
</dbReference>
<dbReference type="RefSeq" id="NP_001301010.1">
    <property type="nucleotide sequence ID" value="NM_001314081.1"/>
</dbReference>
<dbReference type="SMR" id="P51484"/>
<dbReference type="EnsemblMetazoa" id="NM_001314081.1">
    <property type="protein sequence ID" value="NP_001301010.1"/>
    <property type="gene ID" value="LOC106458650"/>
</dbReference>
<dbReference type="GeneID" id="106458650"/>
<dbReference type="KEGG" id="lpol:106458650"/>
<dbReference type="OrthoDB" id="298939at2759"/>
<dbReference type="Proteomes" id="UP000694941">
    <property type="component" value="Unplaced"/>
</dbReference>
<dbReference type="GO" id="GO:0005737">
    <property type="term" value="C:cytoplasm"/>
    <property type="evidence" value="ECO:0007669"/>
    <property type="project" value="TreeGrafter"/>
</dbReference>
<dbReference type="GO" id="GO:0001664">
    <property type="term" value="F:G protein-coupled receptor binding"/>
    <property type="evidence" value="ECO:0007669"/>
    <property type="project" value="TreeGrafter"/>
</dbReference>
<dbReference type="GO" id="GO:0002031">
    <property type="term" value="P:G protein-coupled receptor internalization"/>
    <property type="evidence" value="ECO:0007669"/>
    <property type="project" value="TreeGrafter"/>
</dbReference>
<dbReference type="GO" id="GO:0007165">
    <property type="term" value="P:signal transduction"/>
    <property type="evidence" value="ECO:0007669"/>
    <property type="project" value="InterPro"/>
</dbReference>
<dbReference type="GO" id="GO:0007601">
    <property type="term" value="P:visual perception"/>
    <property type="evidence" value="ECO:0007669"/>
    <property type="project" value="UniProtKB-KW"/>
</dbReference>
<dbReference type="FunFam" id="2.60.40.840:FF:000002">
    <property type="entry name" value="Arrestin 3"/>
    <property type="match status" value="1"/>
</dbReference>
<dbReference type="Gene3D" id="2.60.40.640">
    <property type="match status" value="1"/>
</dbReference>
<dbReference type="Gene3D" id="2.60.40.840">
    <property type="match status" value="1"/>
</dbReference>
<dbReference type="InterPro" id="IPR000698">
    <property type="entry name" value="Arrestin"/>
</dbReference>
<dbReference type="InterPro" id="IPR014752">
    <property type="entry name" value="Arrestin-like_C"/>
</dbReference>
<dbReference type="InterPro" id="IPR011021">
    <property type="entry name" value="Arrestin-like_N"/>
</dbReference>
<dbReference type="InterPro" id="IPR011022">
    <property type="entry name" value="Arrestin_C-like"/>
</dbReference>
<dbReference type="InterPro" id="IPR017864">
    <property type="entry name" value="Arrestin_CS"/>
</dbReference>
<dbReference type="InterPro" id="IPR014753">
    <property type="entry name" value="Arrestin_N"/>
</dbReference>
<dbReference type="InterPro" id="IPR014756">
    <property type="entry name" value="Ig_E-set"/>
</dbReference>
<dbReference type="PANTHER" id="PTHR11792">
    <property type="entry name" value="ARRESTIN"/>
    <property type="match status" value="1"/>
</dbReference>
<dbReference type="PANTHER" id="PTHR11792:SF23">
    <property type="entry name" value="PHOSRESTIN-1"/>
    <property type="match status" value="1"/>
</dbReference>
<dbReference type="Pfam" id="PF02752">
    <property type="entry name" value="Arrestin_C"/>
    <property type="match status" value="1"/>
</dbReference>
<dbReference type="Pfam" id="PF00339">
    <property type="entry name" value="Arrestin_N"/>
    <property type="match status" value="1"/>
</dbReference>
<dbReference type="PRINTS" id="PR00309">
    <property type="entry name" value="ARRESTIN"/>
</dbReference>
<dbReference type="SMART" id="SM01017">
    <property type="entry name" value="Arrestin_C"/>
    <property type="match status" value="1"/>
</dbReference>
<dbReference type="SUPFAM" id="SSF81296">
    <property type="entry name" value="E set domains"/>
    <property type="match status" value="2"/>
</dbReference>
<dbReference type="PROSITE" id="PS00295">
    <property type="entry name" value="ARRESTINS"/>
    <property type="match status" value="1"/>
</dbReference>
<comment type="function">
    <text>Plays an important role in the photoreceptor transduction.</text>
</comment>
<comment type="PTM">
    <text>Phosphorylated.</text>
</comment>
<comment type="similarity">
    <text evidence="1">Belongs to the arrestin family.</text>
</comment>
<reference key="1">
    <citation type="journal article" date="1995" name="J. Neurochem.">
        <title>Isolation and expression of an arrestin cDNA from the horseshoe crab lateral eye.</title>
        <authorList>
            <person name="Smith W.C."/>
            <person name="Greenberg R.M."/>
            <person name="Calman B.G."/>
            <person name="Hendrix M.M."/>
            <person name="Hutchinson L."/>
            <person name="Donoso L.A."/>
            <person name="Battelle B.-A."/>
        </authorList>
    </citation>
    <scope>NUCLEOTIDE SEQUENCE [MRNA]</scope>
    <source>
        <tissue>Retina</tissue>
    </source>
</reference>
<name>ARRH_LIMPO</name>
<keyword id="KW-0597">Phosphoprotein</keyword>
<keyword id="KW-0716">Sensory transduction</keyword>
<keyword id="KW-0844">Vision</keyword>
<accession>P51484</accession>
<proteinExistence type="evidence at transcript level"/>
<organism>
    <name type="scientific">Limulus polyphemus</name>
    <name type="common">Atlantic horseshoe crab</name>
    <dbReference type="NCBI Taxonomy" id="6850"/>
    <lineage>
        <taxon>Eukaryota</taxon>
        <taxon>Metazoa</taxon>
        <taxon>Ecdysozoa</taxon>
        <taxon>Arthropoda</taxon>
        <taxon>Chelicerata</taxon>
        <taxon>Merostomata</taxon>
        <taxon>Xiphosura</taxon>
        <taxon>Limulidae</taxon>
        <taxon>Limulus</taxon>
    </lineage>
</organism>
<protein>
    <recommendedName>
        <fullName>Arrestin, lateral eye</fullName>
    </recommendedName>
</protein>
<sequence length="400" mass="44302">MIPLLSLFYIVAVKVFKKTAPNGKITVYLGKRDFGDHGSYCEPVEGVLLVDNEYLKGRKVFGQVTTTFRYGREEDEVMGLHFSRQLYLALEQVLPTKKNEAPSDFQNRLVRKLGTLAHPFTFALPENAPPSVTLQPGSEDQGRPLGVEYELKLFIAETEDEKPHKRNSVSMAIRKLQYAKPSPLAKQPSALVSKGFMMSSGKLQLEVTLDKELYFHGDKVSANVTISNYSKKTVKNIKVAVVQNTEVTMVNGHFHKTISSIESKEGCPITPGATLSKVYTLLPLASQNKDKRGIALDGMLKEGDTNLASSTLNSTGDAIGIVISYVIRVRLYMGAIGGELVADVSFKLANPEPVPVVPGSQESKAQQEKARMKKQLSREMSTDLIVEDFARRRQFSEDNE</sequence>
<evidence type="ECO:0000305" key="1"/>
<feature type="chain" id="PRO_0000205219" description="Arrestin, lateral eye">
    <location>
        <begin position="1"/>
        <end position="400"/>
    </location>
</feature>